<evidence type="ECO:0000255" key="1">
    <source>
        <dbReference type="HAMAP-Rule" id="MF_00368"/>
    </source>
</evidence>
<evidence type="ECO:0000305" key="2"/>
<reference key="1">
    <citation type="submission" date="2006-06" db="EMBL/GenBank/DDBJ databases">
        <title>Complete sequence of chromosome of Mesorhizobium sp. BNC1.</title>
        <authorList>
            <consortium name="US DOE Joint Genome Institute"/>
            <person name="Copeland A."/>
            <person name="Lucas S."/>
            <person name="Lapidus A."/>
            <person name="Barry K."/>
            <person name="Detter J.C."/>
            <person name="Glavina del Rio T."/>
            <person name="Hammon N."/>
            <person name="Israni S."/>
            <person name="Dalin E."/>
            <person name="Tice H."/>
            <person name="Pitluck S."/>
            <person name="Chertkov O."/>
            <person name="Brettin T."/>
            <person name="Bruce D."/>
            <person name="Han C."/>
            <person name="Tapia R."/>
            <person name="Gilna P."/>
            <person name="Schmutz J."/>
            <person name="Larimer F."/>
            <person name="Land M."/>
            <person name="Hauser L."/>
            <person name="Kyrpides N."/>
            <person name="Mikhailova N."/>
            <person name="Richardson P."/>
        </authorList>
    </citation>
    <scope>NUCLEOTIDE SEQUENCE [LARGE SCALE GENOMIC DNA]</scope>
    <source>
        <strain>BNC1</strain>
    </source>
</reference>
<gene>
    <name evidence="1" type="primary">rplL</name>
    <name type="ordered locus">Meso_1820</name>
</gene>
<protein>
    <recommendedName>
        <fullName evidence="1">Large ribosomal subunit protein bL12</fullName>
    </recommendedName>
    <alternativeName>
        <fullName evidence="2">50S ribosomal protein L7/L12</fullName>
    </alternativeName>
</protein>
<keyword id="KW-0687">Ribonucleoprotein</keyword>
<keyword id="KW-0689">Ribosomal protein</keyword>
<proteinExistence type="inferred from homology"/>
<accession>Q11HB2</accession>
<comment type="function">
    <text evidence="1">Forms part of the ribosomal stalk which helps the ribosome interact with GTP-bound translation factors. Is thus essential for accurate translation.</text>
</comment>
<comment type="subunit">
    <text evidence="1">Homodimer. Part of the ribosomal stalk of the 50S ribosomal subunit. Forms a multimeric L10(L12)X complex, where L10 forms an elongated spine to which 2 to 4 L12 dimers bind in a sequential fashion. Binds GTP-bound translation factors.</text>
</comment>
<comment type="similarity">
    <text evidence="1">Belongs to the bacterial ribosomal protein bL12 family.</text>
</comment>
<dbReference type="EMBL" id="CP000390">
    <property type="protein sequence ID" value="ABG63213.1"/>
    <property type="molecule type" value="Genomic_DNA"/>
</dbReference>
<dbReference type="SMR" id="Q11HB2"/>
<dbReference type="STRING" id="266779.Meso_1820"/>
<dbReference type="KEGG" id="mes:Meso_1820"/>
<dbReference type="eggNOG" id="COG0222">
    <property type="taxonomic scope" value="Bacteria"/>
</dbReference>
<dbReference type="HOGENOM" id="CLU_086499_3_0_5"/>
<dbReference type="OrthoDB" id="9811748at2"/>
<dbReference type="GO" id="GO:0022625">
    <property type="term" value="C:cytosolic large ribosomal subunit"/>
    <property type="evidence" value="ECO:0007669"/>
    <property type="project" value="TreeGrafter"/>
</dbReference>
<dbReference type="GO" id="GO:0003729">
    <property type="term" value="F:mRNA binding"/>
    <property type="evidence" value="ECO:0007669"/>
    <property type="project" value="TreeGrafter"/>
</dbReference>
<dbReference type="GO" id="GO:0003735">
    <property type="term" value="F:structural constituent of ribosome"/>
    <property type="evidence" value="ECO:0007669"/>
    <property type="project" value="InterPro"/>
</dbReference>
<dbReference type="GO" id="GO:0006412">
    <property type="term" value="P:translation"/>
    <property type="evidence" value="ECO:0007669"/>
    <property type="project" value="UniProtKB-UniRule"/>
</dbReference>
<dbReference type="CDD" id="cd00387">
    <property type="entry name" value="Ribosomal_L7_L12"/>
    <property type="match status" value="1"/>
</dbReference>
<dbReference type="FunFam" id="1.20.5.710:FF:000007">
    <property type="entry name" value="50S ribosomal protein L7/L12"/>
    <property type="match status" value="1"/>
</dbReference>
<dbReference type="FunFam" id="3.30.1390.10:FF:000001">
    <property type="entry name" value="50S ribosomal protein L7/L12"/>
    <property type="match status" value="1"/>
</dbReference>
<dbReference type="Gene3D" id="3.30.1390.10">
    <property type="match status" value="1"/>
</dbReference>
<dbReference type="Gene3D" id="1.20.5.710">
    <property type="entry name" value="Single helix bin"/>
    <property type="match status" value="1"/>
</dbReference>
<dbReference type="HAMAP" id="MF_00368">
    <property type="entry name" value="Ribosomal_bL12"/>
    <property type="match status" value="1"/>
</dbReference>
<dbReference type="InterPro" id="IPR000206">
    <property type="entry name" value="Ribosomal_bL12"/>
</dbReference>
<dbReference type="InterPro" id="IPR013823">
    <property type="entry name" value="Ribosomal_bL12_C"/>
</dbReference>
<dbReference type="InterPro" id="IPR014719">
    <property type="entry name" value="Ribosomal_bL12_C/ClpS-like"/>
</dbReference>
<dbReference type="InterPro" id="IPR008932">
    <property type="entry name" value="Ribosomal_bL12_oligo"/>
</dbReference>
<dbReference type="InterPro" id="IPR036235">
    <property type="entry name" value="Ribosomal_bL12_oligo_N_sf"/>
</dbReference>
<dbReference type="NCBIfam" id="TIGR00855">
    <property type="entry name" value="L12"/>
    <property type="match status" value="1"/>
</dbReference>
<dbReference type="PANTHER" id="PTHR45987">
    <property type="entry name" value="39S RIBOSOMAL PROTEIN L12"/>
    <property type="match status" value="1"/>
</dbReference>
<dbReference type="PANTHER" id="PTHR45987:SF4">
    <property type="entry name" value="LARGE RIBOSOMAL SUBUNIT PROTEIN BL12M"/>
    <property type="match status" value="1"/>
</dbReference>
<dbReference type="Pfam" id="PF00542">
    <property type="entry name" value="Ribosomal_L12"/>
    <property type="match status" value="1"/>
</dbReference>
<dbReference type="Pfam" id="PF16320">
    <property type="entry name" value="Ribosomal_L12_N"/>
    <property type="match status" value="1"/>
</dbReference>
<dbReference type="SUPFAM" id="SSF54736">
    <property type="entry name" value="ClpS-like"/>
    <property type="match status" value="1"/>
</dbReference>
<dbReference type="SUPFAM" id="SSF48300">
    <property type="entry name" value="Ribosomal protein L7/12, oligomerisation (N-terminal) domain"/>
    <property type="match status" value="1"/>
</dbReference>
<sequence>MADLAKIVEDLSSLTVLEAAELSKMLEEKWGVSAAAPVAVAAAGGAAAPAAAAEEKTEFDVVLADAGAQKINVIKEVRAITGLGLKEAKDLVEGAPKPVKEGVAKDEAEKIKAQLEGAGAKVELK</sequence>
<organism>
    <name type="scientific">Chelativorans sp. (strain BNC1)</name>
    <dbReference type="NCBI Taxonomy" id="266779"/>
    <lineage>
        <taxon>Bacteria</taxon>
        <taxon>Pseudomonadati</taxon>
        <taxon>Pseudomonadota</taxon>
        <taxon>Alphaproteobacteria</taxon>
        <taxon>Hyphomicrobiales</taxon>
        <taxon>Phyllobacteriaceae</taxon>
        <taxon>Chelativorans</taxon>
    </lineage>
</organism>
<name>RL7_CHESB</name>
<feature type="chain" id="PRO_1000007039" description="Large ribosomal subunit protein bL12">
    <location>
        <begin position="1"/>
        <end position="125"/>
    </location>
</feature>